<sequence>MLYLTKIRNAESEFTENEQKIADFLRANVSELKSVSSRKMAKQLGISQSSIVKFAQKLGAQGFTELRMALIGEYSASREKTNATAQHLHSSITSDDSLEVIARKLNREKELALEQTCALFDYARLQKIIEVISKAPFIQITGLGGSALVGCDLSFKLMKIGYRVACEADTHVQATVSQALKKGDVQIAISYSGSKKEIVLCAEAARKQGATVIAITSLADSPLRRLAHFTLDTVSGETEWRSSSMSTRTAQNSVTDLLFVGLVQLNDVESLKMIQRSSELTQRLK</sequence>
<protein>
    <recommendedName>
        <fullName evidence="1">HTH-type transcriptional regulator MurR</fullName>
    </recommendedName>
    <alternativeName>
        <fullName evidence="1">MurPQ operon repressor</fullName>
    </alternativeName>
</protein>
<keyword id="KW-0119">Carbohydrate metabolism</keyword>
<keyword id="KW-0238">DNA-binding</keyword>
<keyword id="KW-0678">Repressor</keyword>
<keyword id="KW-0804">Transcription</keyword>
<keyword id="KW-0805">Transcription regulation</keyword>
<reference key="1">
    <citation type="journal article" date="2011" name="Proc. Natl. Acad. Sci. U.S.A.">
        <title>Genomic anatomy of Escherichia coli O157:H7 outbreaks.</title>
        <authorList>
            <person name="Eppinger M."/>
            <person name="Mammel M.K."/>
            <person name="Leclerc J.E."/>
            <person name="Ravel J."/>
            <person name="Cebula T.A."/>
        </authorList>
    </citation>
    <scope>NUCLEOTIDE SEQUENCE [LARGE SCALE GENOMIC DNA]</scope>
    <source>
        <strain>EC4115 / EHEC</strain>
    </source>
</reference>
<dbReference type="EMBL" id="CP001164">
    <property type="protein sequence ID" value="ACI35838.1"/>
    <property type="molecule type" value="Genomic_DNA"/>
</dbReference>
<dbReference type="RefSeq" id="WP_000966443.1">
    <property type="nucleotide sequence ID" value="NC_011353.1"/>
</dbReference>
<dbReference type="SMR" id="B5YZX2"/>
<dbReference type="KEGG" id="ecf:ECH74115_3657"/>
<dbReference type="HOGENOM" id="CLU_055769_0_2_6"/>
<dbReference type="UniPathway" id="UPA00342"/>
<dbReference type="GO" id="GO:0097367">
    <property type="term" value="F:carbohydrate derivative binding"/>
    <property type="evidence" value="ECO:0007669"/>
    <property type="project" value="InterPro"/>
</dbReference>
<dbReference type="GO" id="GO:0003677">
    <property type="term" value="F:DNA binding"/>
    <property type="evidence" value="ECO:0007669"/>
    <property type="project" value="UniProtKB-KW"/>
</dbReference>
<dbReference type="GO" id="GO:0003700">
    <property type="term" value="F:DNA-binding transcription factor activity"/>
    <property type="evidence" value="ECO:0007669"/>
    <property type="project" value="UniProtKB-UniRule"/>
</dbReference>
<dbReference type="GO" id="GO:1901135">
    <property type="term" value="P:carbohydrate derivative metabolic process"/>
    <property type="evidence" value="ECO:0007669"/>
    <property type="project" value="InterPro"/>
</dbReference>
<dbReference type="GO" id="GO:0097173">
    <property type="term" value="P:N-acetylmuramic acid catabolic process"/>
    <property type="evidence" value="ECO:0007669"/>
    <property type="project" value="UniProtKB-UniPathway"/>
</dbReference>
<dbReference type="GO" id="GO:0045892">
    <property type="term" value="P:negative regulation of DNA-templated transcription"/>
    <property type="evidence" value="ECO:0007669"/>
    <property type="project" value="UniProtKB-UniRule"/>
</dbReference>
<dbReference type="GO" id="GO:0043470">
    <property type="term" value="P:regulation of carbohydrate catabolic process"/>
    <property type="evidence" value="ECO:0007669"/>
    <property type="project" value="UniProtKB-UniRule"/>
</dbReference>
<dbReference type="CDD" id="cd05013">
    <property type="entry name" value="SIS_RpiR"/>
    <property type="match status" value="1"/>
</dbReference>
<dbReference type="FunFam" id="3.40.50.10490:FF:000028">
    <property type="entry name" value="HTH-type transcriptional regulator MurR"/>
    <property type="match status" value="1"/>
</dbReference>
<dbReference type="Gene3D" id="3.40.50.10490">
    <property type="entry name" value="Glucose-6-phosphate isomerase like protein, domain 1"/>
    <property type="match status" value="1"/>
</dbReference>
<dbReference type="Gene3D" id="1.10.10.10">
    <property type="entry name" value="Winged helix-like DNA-binding domain superfamily/Winged helix DNA-binding domain"/>
    <property type="match status" value="1"/>
</dbReference>
<dbReference type="HAMAP" id="MF_02108">
    <property type="entry name" value="HTH_type_MurR"/>
    <property type="match status" value="1"/>
</dbReference>
<dbReference type="InterPro" id="IPR009057">
    <property type="entry name" value="Homeodomain-like_sf"/>
</dbReference>
<dbReference type="InterPro" id="IPR000281">
    <property type="entry name" value="HTH_RpiR"/>
</dbReference>
<dbReference type="InterPro" id="IPR047640">
    <property type="entry name" value="RpiR-like"/>
</dbReference>
<dbReference type="InterPro" id="IPR035472">
    <property type="entry name" value="RpiR-like_SIS"/>
</dbReference>
<dbReference type="InterPro" id="IPR001347">
    <property type="entry name" value="SIS_dom"/>
</dbReference>
<dbReference type="InterPro" id="IPR046348">
    <property type="entry name" value="SIS_dom_sf"/>
</dbReference>
<dbReference type="InterPro" id="IPR022821">
    <property type="entry name" value="Tscrpt_reg_HTH_MurR"/>
</dbReference>
<dbReference type="InterPro" id="IPR036388">
    <property type="entry name" value="WH-like_DNA-bd_sf"/>
</dbReference>
<dbReference type="NCBIfam" id="NF012026">
    <property type="entry name" value="PRK15482.1"/>
    <property type="match status" value="1"/>
</dbReference>
<dbReference type="PANTHER" id="PTHR30514">
    <property type="entry name" value="GLUCOKINASE"/>
    <property type="match status" value="1"/>
</dbReference>
<dbReference type="PANTHER" id="PTHR30514:SF17">
    <property type="entry name" value="HTH-TYPE TRANSCRIPTIONAL REGULATOR MURR"/>
    <property type="match status" value="1"/>
</dbReference>
<dbReference type="Pfam" id="PF01418">
    <property type="entry name" value="HTH_6"/>
    <property type="match status" value="1"/>
</dbReference>
<dbReference type="Pfam" id="PF01380">
    <property type="entry name" value="SIS"/>
    <property type="match status" value="1"/>
</dbReference>
<dbReference type="SUPFAM" id="SSF46689">
    <property type="entry name" value="Homeodomain-like"/>
    <property type="match status" value="1"/>
</dbReference>
<dbReference type="SUPFAM" id="SSF53697">
    <property type="entry name" value="SIS domain"/>
    <property type="match status" value="1"/>
</dbReference>
<dbReference type="PROSITE" id="PS51071">
    <property type="entry name" value="HTH_RPIR"/>
    <property type="match status" value="1"/>
</dbReference>
<dbReference type="PROSITE" id="PS51464">
    <property type="entry name" value="SIS"/>
    <property type="match status" value="1"/>
</dbReference>
<name>MURR_ECO5E</name>
<organism>
    <name type="scientific">Escherichia coli O157:H7 (strain EC4115 / EHEC)</name>
    <dbReference type="NCBI Taxonomy" id="444450"/>
    <lineage>
        <taxon>Bacteria</taxon>
        <taxon>Pseudomonadati</taxon>
        <taxon>Pseudomonadota</taxon>
        <taxon>Gammaproteobacteria</taxon>
        <taxon>Enterobacterales</taxon>
        <taxon>Enterobacteriaceae</taxon>
        <taxon>Escherichia</taxon>
    </lineage>
</organism>
<comment type="function">
    <text evidence="1">Represses the expression of the murPQ operon involved in the uptake and degradation of N-acetylmuramic acid (MurNAc). Binds to two adjacent inverted repeats within the operator region. MurNAc 6-phosphate, the substrate of MurQ, is the specific inducer that weakens binding of MurR to the operator.</text>
</comment>
<comment type="pathway">
    <text>Amino-sugar metabolism; N-acetylmuramate degradation [regulation].</text>
</comment>
<comment type="subunit">
    <text evidence="1">Homotetramer.</text>
</comment>
<proteinExistence type="inferred from homology"/>
<gene>
    <name evidence="1" type="primary">murR</name>
    <name type="ordered locus">ECH74115_3657</name>
</gene>
<feature type="chain" id="PRO_0000387763" description="HTH-type transcriptional regulator MurR">
    <location>
        <begin position="1"/>
        <end position="285"/>
    </location>
</feature>
<feature type="domain" description="HTH rpiR-type" evidence="1">
    <location>
        <begin position="1"/>
        <end position="77"/>
    </location>
</feature>
<feature type="domain" description="SIS" evidence="1">
    <location>
        <begin position="128"/>
        <end position="268"/>
    </location>
</feature>
<feature type="DNA-binding region" description="H-T-H motif" evidence="1">
    <location>
        <begin position="37"/>
        <end position="56"/>
    </location>
</feature>
<accession>B5YZX2</accession>
<evidence type="ECO:0000255" key="1">
    <source>
        <dbReference type="HAMAP-Rule" id="MF_02108"/>
    </source>
</evidence>